<name>RECO_SALEP</name>
<evidence type="ECO:0000255" key="1">
    <source>
        <dbReference type="HAMAP-Rule" id="MF_00201"/>
    </source>
</evidence>
<feature type="chain" id="PRO_1000099406" description="DNA repair protein RecO">
    <location>
        <begin position="1"/>
        <end position="242"/>
    </location>
</feature>
<reference key="1">
    <citation type="journal article" date="2008" name="Genome Res.">
        <title>Comparative genome analysis of Salmonella enteritidis PT4 and Salmonella gallinarum 287/91 provides insights into evolutionary and host adaptation pathways.</title>
        <authorList>
            <person name="Thomson N.R."/>
            <person name="Clayton D.J."/>
            <person name="Windhorst D."/>
            <person name="Vernikos G."/>
            <person name="Davidson S."/>
            <person name="Churcher C."/>
            <person name="Quail M.A."/>
            <person name="Stevens M."/>
            <person name="Jones M.A."/>
            <person name="Watson M."/>
            <person name="Barron A."/>
            <person name="Layton A."/>
            <person name="Pickard D."/>
            <person name="Kingsley R.A."/>
            <person name="Bignell A."/>
            <person name="Clark L."/>
            <person name="Harris B."/>
            <person name="Ormond D."/>
            <person name="Abdellah Z."/>
            <person name="Brooks K."/>
            <person name="Cherevach I."/>
            <person name="Chillingworth T."/>
            <person name="Woodward J."/>
            <person name="Norberczak H."/>
            <person name="Lord A."/>
            <person name="Arrowsmith C."/>
            <person name="Jagels K."/>
            <person name="Moule S."/>
            <person name="Mungall K."/>
            <person name="Saunders M."/>
            <person name="Whitehead S."/>
            <person name="Chabalgoity J.A."/>
            <person name="Maskell D."/>
            <person name="Humphreys T."/>
            <person name="Roberts M."/>
            <person name="Barrow P.A."/>
            <person name="Dougan G."/>
            <person name="Parkhill J."/>
        </authorList>
    </citation>
    <scope>NUCLEOTIDE SEQUENCE [LARGE SCALE GENOMIC DNA]</scope>
    <source>
        <strain>P125109</strain>
    </source>
</reference>
<proteinExistence type="inferred from homology"/>
<gene>
    <name evidence="1" type="primary">recO</name>
    <name type="ordered locus">SEN2559</name>
</gene>
<dbReference type="EMBL" id="AM933172">
    <property type="protein sequence ID" value="CAR34141.1"/>
    <property type="molecule type" value="Genomic_DNA"/>
</dbReference>
<dbReference type="RefSeq" id="WP_000399381.1">
    <property type="nucleotide sequence ID" value="NC_011294.1"/>
</dbReference>
<dbReference type="SMR" id="B5QTU6"/>
<dbReference type="KEGG" id="set:SEN2559"/>
<dbReference type="HOGENOM" id="CLU_066645_1_0_6"/>
<dbReference type="Proteomes" id="UP000000613">
    <property type="component" value="Chromosome"/>
</dbReference>
<dbReference type="GO" id="GO:0043590">
    <property type="term" value="C:bacterial nucleoid"/>
    <property type="evidence" value="ECO:0007669"/>
    <property type="project" value="TreeGrafter"/>
</dbReference>
<dbReference type="GO" id="GO:0006310">
    <property type="term" value="P:DNA recombination"/>
    <property type="evidence" value="ECO:0007669"/>
    <property type="project" value="UniProtKB-UniRule"/>
</dbReference>
<dbReference type="GO" id="GO:0006302">
    <property type="term" value="P:double-strand break repair"/>
    <property type="evidence" value="ECO:0007669"/>
    <property type="project" value="TreeGrafter"/>
</dbReference>
<dbReference type="FunFam" id="1.20.1440.120:FF:000001">
    <property type="entry name" value="DNA repair protein RecO"/>
    <property type="match status" value="1"/>
</dbReference>
<dbReference type="FunFam" id="2.40.50.140:FF:000074">
    <property type="entry name" value="DNA repair protein RecO"/>
    <property type="match status" value="1"/>
</dbReference>
<dbReference type="Gene3D" id="2.40.50.140">
    <property type="entry name" value="Nucleic acid-binding proteins"/>
    <property type="match status" value="1"/>
</dbReference>
<dbReference type="Gene3D" id="1.20.1440.120">
    <property type="entry name" value="Recombination protein O, C-terminal domain"/>
    <property type="match status" value="1"/>
</dbReference>
<dbReference type="HAMAP" id="MF_00201">
    <property type="entry name" value="RecO"/>
    <property type="match status" value="1"/>
</dbReference>
<dbReference type="InterPro" id="IPR037278">
    <property type="entry name" value="ARFGAP/RecO"/>
</dbReference>
<dbReference type="InterPro" id="IPR022572">
    <property type="entry name" value="DNA_rep/recomb_RecO_N"/>
</dbReference>
<dbReference type="InterPro" id="IPR012340">
    <property type="entry name" value="NA-bd_OB-fold"/>
</dbReference>
<dbReference type="InterPro" id="IPR003717">
    <property type="entry name" value="RecO"/>
</dbReference>
<dbReference type="InterPro" id="IPR042242">
    <property type="entry name" value="RecO_C"/>
</dbReference>
<dbReference type="NCBIfam" id="TIGR00613">
    <property type="entry name" value="reco"/>
    <property type="match status" value="1"/>
</dbReference>
<dbReference type="PANTHER" id="PTHR33991">
    <property type="entry name" value="DNA REPAIR PROTEIN RECO"/>
    <property type="match status" value="1"/>
</dbReference>
<dbReference type="PANTHER" id="PTHR33991:SF1">
    <property type="entry name" value="DNA REPAIR PROTEIN RECO"/>
    <property type="match status" value="1"/>
</dbReference>
<dbReference type="Pfam" id="PF02565">
    <property type="entry name" value="RecO_C"/>
    <property type="match status" value="1"/>
</dbReference>
<dbReference type="Pfam" id="PF11967">
    <property type="entry name" value="RecO_N"/>
    <property type="match status" value="1"/>
</dbReference>
<dbReference type="SUPFAM" id="SSF57863">
    <property type="entry name" value="ArfGap/RecO-like zinc finger"/>
    <property type="match status" value="1"/>
</dbReference>
<dbReference type="SUPFAM" id="SSF50249">
    <property type="entry name" value="Nucleic acid-binding proteins"/>
    <property type="match status" value="1"/>
</dbReference>
<comment type="function">
    <text evidence="1">Involved in DNA repair and RecF pathway recombination.</text>
</comment>
<comment type="subunit">
    <text evidence="1">Monomer.</text>
</comment>
<comment type="similarity">
    <text evidence="1">Belongs to the RecO family.</text>
</comment>
<protein>
    <recommendedName>
        <fullName evidence="1">DNA repair protein RecO</fullName>
    </recommendedName>
    <alternativeName>
        <fullName evidence="1">Recombination protein O</fullName>
    </alternativeName>
</protein>
<organism>
    <name type="scientific">Salmonella enteritidis PT4 (strain P125109)</name>
    <dbReference type="NCBI Taxonomy" id="550537"/>
    <lineage>
        <taxon>Bacteria</taxon>
        <taxon>Pseudomonadati</taxon>
        <taxon>Pseudomonadota</taxon>
        <taxon>Gammaproteobacteria</taxon>
        <taxon>Enterobacterales</taxon>
        <taxon>Enterobacteriaceae</taxon>
        <taxon>Salmonella</taxon>
    </lineage>
</organism>
<accession>B5QTU6</accession>
<sequence length="242" mass="27560">MEGWQRAFVLHSRPWSETSLMLDVFTEESGRVRLVAKGARSKRSNLKGALQPFTPLLLRYSGRGEVKTLRSAEAVSLALPLSGITLYSGLYINELLSRVLEYETRFSELFFDYLNCIQALAGTTGSPEPALRRFELALLGHLGYGVNFTHCAGSGERVDDTMTYRYREEKGFFASVVIDNNTFTGRHLKALEEREFPDVDTLRAAKRFTRMALKPYLGGKPLKSRELFRQFMPKRTVKMKKD</sequence>
<keyword id="KW-0227">DNA damage</keyword>
<keyword id="KW-0233">DNA recombination</keyword>
<keyword id="KW-0234">DNA repair</keyword>